<keyword id="KW-0028">Amino-acid biosynthesis</keyword>
<keyword id="KW-0057">Aromatic amino acid biosynthesis</keyword>
<keyword id="KW-0413">Isomerase</keyword>
<keyword id="KW-0822">Tryptophan biosynthesis</keyword>
<protein>
    <recommendedName>
        <fullName evidence="1">N-(5'-phosphoribosyl)anthranilate isomerase</fullName>
        <shortName evidence="1">PRAI</shortName>
        <ecNumber evidence="1">5.3.1.24</ecNumber>
    </recommendedName>
</protein>
<reference key="1">
    <citation type="journal article" date="2009" name="J. Bacteriol.">
        <title>Genome sequences of three Agrobacterium biovars help elucidate the evolution of multichromosome genomes in bacteria.</title>
        <authorList>
            <person name="Slater S.C."/>
            <person name="Goldman B.S."/>
            <person name="Goodner B."/>
            <person name="Setubal J.C."/>
            <person name="Farrand S.K."/>
            <person name="Nester E.W."/>
            <person name="Burr T.J."/>
            <person name="Banta L."/>
            <person name="Dickerman A.W."/>
            <person name="Paulsen I."/>
            <person name="Otten L."/>
            <person name="Suen G."/>
            <person name="Welch R."/>
            <person name="Almeida N.F."/>
            <person name="Arnold F."/>
            <person name="Burton O.T."/>
            <person name="Du Z."/>
            <person name="Ewing A."/>
            <person name="Godsy E."/>
            <person name="Heisel S."/>
            <person name="Houmiel K.L."/>
            <person name="Jhaveri J."/>
            <person name="Lu J."/>
            <person name="Miller N.M."/>
            <person name="Norton S."/>
            <person name="Chen Q."/>
            <person name="Phoolcharoen W."/>
            <person name="Ohlin V."/>
            <person name="Ondrusek D."/>
            <person name="Pride N."/>
            <person name="Stricklin S.L."/>
            <person name="Sun J."/>
            <person name="Wheeler C."/>
            <person name="Wilson L."/>
            <person name="Zhu H."/>
            <person name="Wood D.W."/>
        </authorList>
    </citation>
    <scope>NUCLEOTIDE SEQUENCE [LARGE SCALE GENOMIC DNA]</scope>
    <source>
        <strain>K84 / ATCC BAA-868</strain>
    </source>
</reference>
<sequence>MNPDIKICGLKTPEAMDRALERGATHVGFIFFEKSPRYIEPDLAGKLAERARGKAKIVAVTVNPTNDDLDEIISLVRPDILQLHGNESPERVLTIKAVYNLPVMKAMSVRDADDLKRVEAYIGIADRFLFDAKPPAGSELPGGNGVSFDWSLMSWLDDRVDYMLSGGVNKDNFAQALASTRATGIDLSSGVESAPGVKDPKKIDEFFDAVAEACLPEPAAGS</sequence>
<gene>
    <name evidence="1" type="primary">trpF</name>
    <name type="ordered locus">Arad_0024</name>
</gene>
<dbReference type="EC" id="5.3.1.24" evidence="1"/>
<dbReference type="EMBL" id="CP000628">
    <property type="protein sequence ID" value="ACM24825.1"/>
    <property type="molecule type" value="Genomic_DNA"/>
</dbReference>
<dbReference type="RefSeq" id="WP_007698619.1">
    <property type="nucleotide sequence ID" value="NC_011985.1"/>
</dbReference>
<dbReference type="SMR" id="B9JG42"/>
<dbReference type="STRING" id="311403.Arad_0024"/>
<dbReference type="KEGG" id="ara:Arad_0024"/>
<dbReference type="eggNOG" id="COG0135">
    <property type="taxonomic scope" value="Bacteria"/>
</dbReference>
<dbReference type="HOGENOM" id="CLU_076364_1_1_5"/>
<dbReference type="UniPathway" id="UPA00035">
    <property type="reaction ID" value="UER00042"/>
</dbReference>
<dbReference type="Proteomes" id="UP000001600">
    <property type="component" value="Chromosome 1"/>
</dbReference>
<dbReference type="GO" id="GO:0004640">
    <property type="term" value="F:phosphoribosylanthranilate isomerase activity"/>
    <property type="evidence" value="ECO:0007669"/>
    <property type="project" value="UniProtKB-UniRule"/>
</dbReference>
<dbReference type="GO" id="GO:0000162">
    <property type="term" value="P:L-tryptophan biosynthetic process"/>
    <property type="evidence" value="ECO:0007669"/>
    <property type="project" value="UniProtKB-UniRule"/>
</dbReference>
<dbReference type="CDD" id="cd00405">
    <property type="entry name" value="PRAI"/>
    <property type="match status" value="1"/>
</dbReference>
<dbReference type="Gene3D" id="3.20.20.70">
    <property type="entry name" value="Aldolase class I"/>
    <property type="match status" value="1"/>
</dbReference>
<dbReference type="HAMAP" id="MF_00135">
    <property type="entry name" value="PRAI"/>
    <property type="match status" value="1"/>
</dbReference>
<dbReference type="InterPro" id="IPR013785">
    <property type="entry name" value="Aldolase_TIM"/>
</dbReference>
<dbReference type="InterPro" id="IPR001240">
    <property type="entry name" value="PRAI_dom"/>
</dbReference>
<dbReference type="InterPro" id="IPR011060">
    <property type="entry name" value="RibuloseP-bd_barrel"/>
</dbReference>
<dbReference type="InterPro" id="IPR044643">
    <property type="entry name" value="TrpF_fam"/>
</dbReference>
<dbReference type="NCBIfam" id="NF002295">
    <property type="entry name" value="PRK01222.1-1"/>
    <property type="match status" value="1"/>
</dbReference>
<dbReference type="PANTHER" id="PTHR42894">
    <property type="entry name" value="N-(5'-PHOSPHORIBOSYL)ANTHRANILATE ISOMERASE"/>
    <property type="match status" value="1"/>
</dbReference>
<dbReference type="PANTHER" id="PTHR42894:SF1">
    <property type="entry name" value="N-(5'-PHOSPHORIBOSYL)ANTHRANILATE ISOMERASE"/>
    <property type="match status" value="1"/>
</dbReference>
<dbReference type="Pfam" id="PF00697">
    <property type="entry name" value="PRAI"/>
    <property type="match status" value="1"/>
</dbReference>
<dbReference type="SUPFAM" id="SSF51366">
    <property type="entry name" value="Ribulose-phoshate binding barrel"/>
    <property type="match status" value="1"/>
</dbReference>
<proteinExistence type="inferred from homology"/>
<organism>
    <name type="scientific">Rhizobium rhizogenes (strain K84 / ATCC BAA-868)</name>
    <name type="common">Agrobacterium radiobacter</name>
    <dbReference type="NCBI Taxonomy" id="311403"/>
    <lineage>
        <taxon>Bacteria</taxon>
        <taxon>Pseudomonadati</taxon>
        <taxon>Pseudomonadota</taxon>
        <taxon>Alphaproteobacteria</taxon>
        <taxon>Hyphomicrobiales</taxon>
        <taxon>Rhizobiaceae</taxon>
        <taxon>Rhizobium/Agrobacterium group</taxon>
        <taxon>Rhizobium</taxon>
    </lineage>
</organism>
<evidence type="ECO:0000255" key="1">
    <source>
        <dbReference type="HAMAP-Rule" id="MF_00135"/>
    </source>
</evidence>
<comment type="catalytic activity">
    <reaction evidence="1">
        <text>N-(5-phospho-beta-D-ribosyl)anthranilate = 1-(2-carboxyphenylamino)-1-deoxy-D-ribulose 5-phosphate</text>
        <dbReference type="Rhea" id="RHEA:21540"/>
        <dbReference type="ChEBI" id="CHEBI:18277"/>
        <dbReference type="ChEBI" id="CHEBI:58613"/>
        <dbReference type="EC" id="5.3.1.24"/>
    </reaction>
</comment>
<comment type="pathway">
    <text evidence="1">Amino-acid biosynthesis; L-tryptophan biosynthesis; L-tryptophan from chorismate: step 3/5.</text>
</comment>
<comment type="similarity">
    <text evidence="1">Belongs to the TrpF family.</text>
</comment>
<name>TRPF_RHIR8</name>
<accession>B9JG42</accession>
<feature type="chain" id="PRO_1000197071" description="N-(5'-phosphoribosyl)anthranilate isomerase">
    <location>
        <begin position="1"/>
        <end position="222"/>
    </location>
</feature>